<gene>
    <name evidence="1" type="primary">mnmA</name>
    <name type="ordered locus">P9303_19621</name>
</gene>
<keyword id="KW-0067">ATP-binding</keyword>
<keyword id="KW-0963">Cytoplasm</keyword>
<keyword id="KW-1015">Disulfide bond</keyword>
<keyword id="KW-0547">Nucleotide-binding</keyword>
<keyword id="KW-0694">RNA-binding</keyword>
<keyword id="KW-0808">Transferase</keyword>
<keyword id="KW-0819">tRNA processing</keyword>
<keyword id="KW-0820">tRNA-binding</keyword>
<organism>
    <name type="scientific">Prochlorococcus marinus (strain MIT 9303)</name>
    <dbReference type="NCBI Taxonomy" id="59922"/>
    <lineage>
        <taxon>Bacteria</taxon>
        <taxon>Bacillati</taxon>
        <taxon>Cyanobacteriota</taxon>
        <taxon>Cyanophyceae</taxon>
        <taxon>Synechococcales</taxon>
        <taxon>Prochlorococcaceae</taxon>
        <taxon>Prochlorococcus</taxon>
    </lineage>
</organism>
<accession>A2CB44</accession>
<dbReference type="EC" id="2.8.1.13" evidence="1"/>
<dbReference type="EMBL" id="CP000554">
    <property type="protein sequence ID" value="ABM78704.1"/>
    <property type="status" value="ALT_INIT"/>
    <property type="molecule type" value="Genomic_DNA"/>
</dbReference>
<dbReference type="RefSeq" id="WP_041374855.1">
    <property type="nucleotide sequence ID" value="NC_008820.1"/>
</dbReference>
<dbReference type="SMR" id="A2CB44"/>
<dbReference type="STRING" id="59922.P9303_19621"/>
<dbReference type="KEGG" id="pmf:P9303_19621"/>
<dbReference type="HOGENOM" id="CLU_035188_0_0_3"/>
<dbReference type="Proteomes" id="UP000002274">
    <property type="component" value="Chromosome"/>
</dbReference>
<dbReference type="GO" id="GO:0005737">
    <property type="term" value="C:cytoplasm"/>
    <property type="evidence" value="ECO:0007669"/>
    <property type="project" value="UniProtKB-SubCell"/>
</dbReference>
<dbReference type="GO" id="GO:0005524">
    <property type="term" value="F:ATP binding"/>
    <property type="evidence" value="ECO:0007669"/>
    <property type="project" value="UniProtKB-KW"/>
</dbReference>
<dbReference type="GO" id="GO:0000049">
    <property type="term" value="F:tRNA binding"/>
    <property type="evidence" value="ECO:0007669"/>
    <property type="project" value="UniProtKB-KW"/>
</dbReference>
<dbReference type="GO" id="GO:0103016">
    <property type="term" value="F:tRNA-uridine 2-sulfurtransferase activity"/>
    <property type="evidence" value="ECO:0007669"/>
    <property type="project" value="UniProtKB-EC"/>
</dbReference>
<dbReference type="GO" id="GO:0002143">
    <property type="term" value="P:tRNA wobble position uridine thiolation"/>
    <property type="evidence" value="ECO:0007669"/>
    <property type="project" value="TreeGrafter"/>
</dbReference>
<dbReference type="CDD" id="cd01998">
    <property type="entry name" value="MnmA_TRMU-like"/>
    <property type="match status" value="1"/>
</dbReference>
<dbReference type="FunFam" id="2.30.30.280:FF:000001">
    <property type="entry name" value="tRNA-specific 2-thiouridylase MnmA"/>
    <property type="match status" value="1"/>
</dbReference>
<dbReference type="Gene3D" id="2.30.30.280">
    <property type="entry name" value="Adenine nucleotide alpha hydrolases-like domains"/>
    <property type="match status" value="1"/>
</dbReference>
<dbReference type="Gene3D" id="3.40.50.620">
    <property type="entry name" value="HUPs"/>
    <property type="match status" value="1"/>
</dbReference>
<dbReference type="Gene3D" id="2.40.30.10">
    <property type="entry name" value="Translation factors"/>
    <property type="match status" value="1"/>
</dbReference>
<dbReference type="HAMAP" id="MF_00144">
    <property type="entry name" value="tRNA_thiouridyl_MnmA"/>
    <property type="match status" value="1"/>
</dbReference>
<dbReference type="InterPro" id="IPR004506">
    <property type="entry name" value="MnmA-like"/>
</dbReference>
<dbReference type="InterPro" id="IPR046885">
    <property type="entry name" value="MnmA-like_C"/>
</dbReference>
<dbReference type="InterPro" id="IPR046884">
    <property type="entry name" value="MnmA-like_central"/>
</dbReference>
<dbReference type="InterPro" id="IPR023382">
    <property type="entry name" value="MnmA-like_central_sf"/>
</dbReference>
<dbReference type="InterPro" id="IPR014729">
    <property type="entry name" value="Rossmann-like_a/b/a_fold"/>
</dbReference>
<dbReference type="NCBIfam" id="NF001138">
    <property type="entry name" value="PRK00143.1"/>
    <property type="match status" value="1"/>
</dbReference>
<dbReference type="NCBIfam" id="TIGR00420">
    <property type="entry name" value="trmU"/>
    <property type="match status" value="1"/>
</dbReference>
<dbReference type="PANTHER" id="PTHR11933:SF5">
    <property type="entry name" value="MITOCHONDRIAL TRNA-SPECIFIC 2-THIOURIDYLASE 1"/>
    <property type="match status" value="1"/>
</dbReference>
<dbReference type="PANTHER" id="PTHR11933">
    <property type="entry name" value="TRNA 5-METHYLAMINOMETHYL-2-THIOURIDYLATE -METHYLTRANSFERASE"/>
    <property type="match status" value="1"/>
</dbReference>
<dbReference type="Pfam" id="PF03054">
    <property type="entry name" value="tRNA_Me_trans"/>
    <property type="match status" value="1"/>
</dbReference>
<dbReference type="Pfam" id="PF20258">
    <property type="entry name" value="tRNA_Me_trans_C"/>
    <property type="match status" value="1"/>
</dbReference>
<dbReference type="Pfam" id="PF20259">
    <property type="entry name" value="tRNA_Me_trans_M"/>
    <property type="match status" value="1"/>
</dbReference>
<dbReference type="SUPFAM" id="SSF52402">
    <property type="entry name" value="Adenine nucleotide alpha hydrolases-like"/>
    <property type="match status" value="1"/>
</dbReference>
<name>MNMA_PROM3</name>
<sequence length="409" mass="44412">MQPPIPAPLKHVSRTPATPAVAKALTRLQCWPGEQRVAVGLSGGVDSSLSAALLVEAGWQVEGLTLWLMSGKGACCSDGLIDAAGICEQLKIPHHVVDSRATFQAEIVDQLVQGYQQGVTPLPCSRCNRSVKFAAMLSWAEKERQLHRVATGHYARIRHREDPEPQQALPGDSSGRHQLLRGLDQNKDQSYFLYDLSQDVLAKVIFPLGELTKAETRQEAERYGLRTAKKAESQDLCLADHYGSMKAFLDNYLPARQGEIVLQDGKVVGEHDGIEHFTIGQRKGLGVAWREPLHVVQLDATANRVIVAPRAEAGRDSCVVGAVNWISIAPPSSAIDVEVQVRYRSGPVAAQLIPIEATAEDIAADRPHRCRLTFNEEQFSITPGQAAVFYAADAVLGGGLIQQINTASS</sequence>
<feature type="chain" id="PRO_0000349747" description="tRNA-specific 2-thiouridylase MnmA">
    <location>
        <begin position="1"/>
        <end position="409"/>
    </location>
</feature>
<feature type="region of interest" description="Disordered" evidence="2">
    <location>
        <begin position="156"/>
        <end position="179"/>
    </location>
</feature>
<feature type="region of interest" description="Interaction with tRNA" evidence="1">
    <location>
        <begin position="187"/>
        <end position="189"/>
    </location>
</feature>
<feature type="region of interest" description="Interaction with tRNA" evidence="1">
    <location>
        <begin position="342"/>
        <end position="343"/>
    </location>
</feature>
<feature type="active site" description="Nucleophile" evidence="1">
    <location>
        <position position="127"/>
    </location>
</feature>
<feature type="active site" description="Cysteine persulfide intermediate" evidence="1">
    <location>
        <position position="237"/>
    </location>
</feature>
<feature type="binding site" evidence="1">
    <location>
        <begin position="40"/>
        <end position="47"/>
    </location>
    <ligand>
        <name>ATP</name>
        <dbReference type="ChEBI" id="CHEBI:30616"/>
    </ligand>
</feature>
<feature type="binding site" evidence="1">
    <location>
        <position position="66"/>
    </location>
    <ligand>
        <name>ATP</name>
        <dbReference type="ChEBI" id="CHEBI:30616"/>
    </ligand>
</feature>
<feature type="binding site" evidence="1">
    <location>
        <position position="152"/>
    </location>
    <ligand>
        <name>ATP</name>
        <dbReference type="ChEBI" id="CHEBI:30616"/>
    </ligand>
</feature>
<feature type="site" description="Interaction with tRNA" evidence="1">
    <location>
        <position position="153"/>
    </location>
</feature>
<feature type="site" description="Interaction with tRNA" evidence="1">
    <location>
        <position position="385"/>
    </location>
</feature>
<feature type="disulfide bond" description="Alternate" evidence="1">
    <location>
        <begin position="127"/>
        <end position="237"/>
    </location>
</feature>
<reference key="1">
    <citation type="journal article" date="2007" name="PLoS Genet.">
        <title>Patterns and implications of gene gain and loss in the evolution of Prochlorococcus.</title>
        <authorList>
            <person name="Kettler G.C."/>
            <person name="Martiny A.C."/>
            <person name="Huang K."/>
            <person name="Zucker J."/>
            <person name="Coleman M.L."/>
            <person name="Rodrigue S."/>
            <person name="Chen F."/>
            <person name="Lapidus A."/>
            <person name="Ferriera S."/>
            <person name="Johnson J."/>
            <person name="Steglich C."/>
            <person name="Church G.M."/>
            <person name="Richardson P."/>
            <person name="Chisholm S.W."/>
        </authorList>
    </citation>
    <scope>NUCLEOTIDE SEQUENCE [LARGE SCALE GENOMIC DNA]</scope>
    <source>
        <strain>MIT 9303</strain>
    </source>
</reference>
<evidence type="ECO:0000255" key="1">
    <source>
        <dbReference type="HAMAP-Rule" id="MF_00144"/>
    </source>
</evidence>
<evidence type="ECO:0000256" key="2">
    <source>
        <dbReference type="SAM" id="MobiDB-lite"/>
    </source>
</evidence>
<evidence type="ECO:0000305" key="3"/>
<protein>
    <recommendedName>
        <fullName evidence="1">tRNA-specific 2-thiouridylase MnmA</fullName>
        <ecNumber evidence="1">2.8.1.13</ecNumber>
    </recommendedName>
</protein>
<comment type="function">
    <text evidence="1">Catalyzes the 2-thiolation of uridine at the wobble position (U34) of tRNA, leading to the formation of s(2)U34.</text>
</comment>
<comment type="catalytic activity">
    <reaction evidence="1">
        <text>S-sulfanyl-L-cysteinyl-[protein] + uridine(34) in tRNA + AH2 + ATP = 2-thiouridine(34) in tRNA + L-cysteinyl-[protein] + A + AMP + diphosphate + H(+)</text>
        <dbReference type="Rhea" id="RHEA:47032"/>
        <dbReference type="Rhea" id="RHEA-COMP:10131"/>
        <dbReference type="Rhea" id="RHEA-COMP:11726"/>
        <dbReference type="Rhea" id="RHEA-COMP:11727"/>
        <dbReference type="Rhea" id="RHEA-COMP:11728"/>
        <dbReference type="ChEBI" id="CHEBI:13193"/>
        <dbReference type="ChEBI" id="CHEBI:15378"/>
        <dbReference type="ChEBI" id="CHEBI:17499"/>
        <dbReference type="ChEBI" id="CHEBI:29950"/>
        <dbReference type="ChEBI" id="CHEBI:30616"/>
        <dbReference type="ChEBI" id="CHEBI:33019"/>
        <dbReference type="ChEBI" id="CHEBI:61963"/>
        <dbReference type="ChEBI" id="CHEBI:65315"/>
        <dbReference type="ChEBI" id="CHEBI:87170"/>
        <dbReference type="ChEBI" id="CHEBI:456215"/>
        <dbReference type="EC" id="2.8.1.13"/>
    </reaction>
</comment>
<comment type="subcellular location">
    <subcellularLocation>
        <location evidence="1">Cytoplasm</location>
    </subcellularLocation>
</comment>
<comment type="similarity">
    <text evidence="1">Belongs to the MnmA/TRMU family.</text>
</comment>
<comment type="sequence caution" evidence="3">
    <conflict type="erroneous initiation">
        <sequence resource="EMBL-CDS" id="ABM78704"/>
    </conflict>
</comment>
<proteinExistence type="inferred from homology"/>